<dbReference type="EC" id="2.5.1.75" evidence="1"/>
<dbReference type="EMBL" id="CP001130">
    <property type="protein sequence ID" value="ACG56808.1"/>
    <property type="molecule type" value="Genomic_DNA"/>
</dbReference>
<dbReference type="RefSeq" id="WP_012513165.1">
    <property type="nucleotide sequence ID" value="NC_011126.1"/>
</dbReference>
<dbReference type="SMR" id="B4U6P0"/>
<dbReference type="STRING" id="380749.HY04AAS1_0116"/>
<dbReference type="KEGG" id="hya:HY04AAS1_0116"/>
<dbReference type="eggNOG" id="COG0324">
    <property type="taxonomic scope" value="Bacteria"/>
</dbReference>
<dbReference type="HOGENOM" id="CLU_032616_0_1_0"/>
<dbReference type="OrthoDB" id="9776390at2"/>
<dbReference type="GO" id="GO:0005524">
    <property type="term" value="F:ATP binding"/>
    <property type="evidence" value="ECO:0007669"/>
    <property type="project" value="UniProtKB-UniRule"/>
</dbReference>
<dbReference type="GO" id="GO:0052381">
    <property type="term" value="F:tRNA dimethylallyltransferase activity"/>
    <property type="evidence" value="ECO:0007669"/>
    <property type="project" value="UniProtKB-UniRule"/>
</dbReference>
<dbReference type="GO" id="GO:0006400">
    <property type="term" value="P:tRNA modification"/>
    <property type="evidence" value="ECO:0007669"/>
    <property type="project" value="TreeGrafter"/>
</dbReference>
<dbReference type="Gene3D" id="1.10.20.140">
    <property type="match status" value="1"/>
</dbReference>
<dbReference type="Gene3D" id="3.40.50.300">
    <property type="entry name" value="P-loop containing nucleotide triphosphate hydrolases"/>
    <property type="match status" value="1"/>
</dbReference>
<dbReference type="HAMAP" id="MF_00185">
    <property type="entry name" value="IPP_trans"/>
    <property type="match status" value="1"/>
</dbReference>
<dbReference type="InterPro" id="IPR039657">
    <property type="entry name" value="Dimethylallyltransferase"/>
</dbReference>
<dbReference type="InterPro" id="IPR018022">
    <property type="entry name" value="IPT"/>
</dbReference>
<dbReference type="InterPro" id="IPR027417">
    <property type="entry name" value="P-loop_NTPase"/>
</dbReference>
<dbReference type="NCBIfam" id="TIGR00174">
    <property type="entry name" value="miaA"/>
    <property type="match status" value="1"/>
</dbReference>
<dbReference type="PANTHER" id="PTHR11088">
    <property type="entry name" value="TRNA DIMETHYLALLYLTRANSFERASE"/>
    <property type="match status" value="1"/>
</dbReference>
<dbReference type="PANTHER" id="PTHR11088:SF60">
    <property type="entry name" value="TRNA DIMETHYLALLYLTRANSFERASE"/>
    <property type="match status" value="1"/>
</dbReference>
<dbReference type="Pfam" id="PF01715">
    <property type="entry name" value="IPPT"/>
    <property type="match status" value="1"/>
</dbReference>
<dbReference type="SUPFAM" id="SSF52540">
    <property type="entry name" value="P-loop containing nucleoside triphosphate hydrolases"/>
    <property type="match status" value="1"/>
</dbReference>
<feature type="chain" id="PRO_1000118530" description="tRNA dimethylallyltransferase">
    <location>
        <begin position="1"/>
        <end position="298"/>
    </location>
</feature>
<feature type="region of interest" description="Interaction with substrate tRNA" evidence="1">
    <location>
        <begin position="35"/>
        <end position="38"/>
    </location>
</feature>
<feature type="binding site" evidence="1">
    <location>
        <begin position="10"/>
        <end position="17"/>
    </location>
    <ligand>
        <name>ATP</name>
        <dbReference type="ChEBI" id="CHEBI:30616"/>
    </ligand>
</feature>
<feature type="binding site" evidence="1">
    <location>
        <begin position="12"/>
        <end position="17"/>
    </location>
    <ligand>
        <name>substrate</name>
    </ligand>
</feature>
<feature type="site" description="Interaction with substrate tRNA" evidence="1">
    <location>
        <position position="101"/>
    </location>
</feature>
<feature type="site" description="Interaction with substrate tRNA" evidence="1">
    <location>
        <position position="123"/>
    </location>
</feature>
<name>MIAA_HYDS0</name>
<reference key="1">
    <citation type="journal article" date="2009" name="J. Bacteriol.">
        <title>Complete and draft genome sequences of six members of the Aquificales.</title>
        <authorList>
            <person name="Reysenbach A.-L."/>
            <person name="Hamamura N."/>
            <person name="Podar M."/>
            <person name="Griffiths E."/>
            <person name="Ferreira S."/>
            <person name="Hochstein R."/>
            <person name="Heidelberg J."/>
            <person name="Johnson J."/>
            <person name="Mead D."/>
            <person name="Pohorille A."/>
            <person name="Sarmiento M."/>
            <person name="Schweighofer K."/>
            <person name="Seshadri R."/>
            <person name="Voytek M.A."/>
        </authorList>
    </citation>
    <scope>NUCLEOTIDE SEQUENCE [LARGE SCALE GENOMIC DNA]</scope>
    <source>
        <strain>Y04AAS1</strain>
    </source>
</reference>
<protein>
    <recommendedName>
        <fullName evidence="1">tRNA dimethylallyltransferase</fullName>
        <ecNumber evidence="1">2.5.1.75</ecNumber>
    </recommendedName>
    <alternativeName>
        <fullName evidence="1">Dimethylallyl diphosphate:tRNA dimethylallyltransferase</fullName>
        <shortName evidence="1">DMAPP:tRNA dimethylallyltransferase</shortName>
        <shortName evidence="1">DMATase</shortName>
    </alternativeName>
    <alternativeName>
        <fullName evidence="1">Isopentenyl-diphosphate:tRNA isopentenyltransferase</fullName>
        <shortName evidence="1">IPP transferase</shortName>
        <shortName evidence="1">IPPT</shortName>
        <shortName evidence="1">IPTase</shortName>
    </alternativeName>
</protein>
<organism>
    <name type="scientific">Hydrogenobaculum sp. (strain Y04AAS1)</name>
    <dbReference type="NCBI Taxonomy" id="380749"/>
    <lineage>
        <taxon>Bacteria</taxon>
        <taxon>Pseudomonadati</taxon>
        <taxon>Aquificota</taxon>
        <taxon>Aquificia</taxon>
        <taxon>Aquificales</taxon>
        <taxon>Aquificaceae</taxon>
        <taxon>Hydrogenobaculum</taxon>
    </lineage>
</organism>
<evidence type="ECO:0000255" key="1">
    <source>
        <dbReference type="HAMAP-Rule" id="MF_00185"/>
    </source>
</evidence>
<gene>
    <name evidence="1" type="primary">miaA</name>
    <name type="ordered locus">HY04AAS1_0116</name>
</gene>
<keyword id="KW-0067">ATP-binding</keyword>
<keyword id="KW-0460">Magnesium</keyword>
<keyword id="KW-0547">Nucleotide-binding</keyword>
<keyword id="KW-0808">Transferase</keyword>
<keyword id="KW-0819">tRNA processing</keyword>
<sequence length="298" mass="34473">MSIDAIIIGGPTASGKTEIAHELAKLLNTEIISADSMCVYKFMNIGTAKPSLEKRKEIKYHMIDVVLPNEYFDTYIYVEKAKSIIKQIKEKGKIPIIVGGTYLYIQALLYGLPETSEPDFRLRKKLESIANKKGLHFLYEKLKVIDKVYAEKIGKNDKKRIIRALEIFINTGKPFSSFHKWHEPTMKVLGFYTNLTQEELNKNIEKRTYYMIEQGLEVECINLLCLGYKEAMTSSQAIGYKEMIPYIEGKSSLKEAIENIIKNTKEYASRQRRWFQKTTFTPIRTIEDIKHHLQSLVL</sequence>
<accession>B4U6P0</accession>
<proteinExistence type="inferred from homology"/>
<comment type="function">
    <text evidence="1">Catalyzes the transfer of a dimethylallyl group onto the adenine at position 37 in tRNAs that read codons beginning with uridine, leading to the formation of N6-(dimethylallyl)adenosine (i(6)A).</text>
</comment>
<comment type="catalytic activity">
    <reaction evidence="1">
        <text>adenosine(37) in tRNA + dimethylallyl diphosphate = N(6)-dimethylallyladenosine(37) in tRNA + diphosphate</text>
        <dbReference type="Rhea" id="RHEA:26482"/>
        <dbReference type="Rhea" id="RHEA-COMP:10162"/>
        <dbReference type="Rhea" id="RHEA-COMP:10375"/>
        <dbReference type="ChEBI" id="CHEBI:33019"/>
        <dbReference type="ChEBI" id="CHEBI:57623"/>
        <dbReference type="ChEBI" id="CHEBI:74411"/>
        <dbReference type="ChEBI" id="CHEBI:74415"/>
        <dbReference type="EC" id="2.5.1.75"/>
    </reaction>
</comment>
<comment type="cofactor">
    <cofactor evidence="1">
        <name>Mg(2+)</name>
        <dbReference type="ChEBI" id="CHEBI:18420"/>
    </cofactor>
</comment>
<comment type="subunit">
    <text evidence="1">Monomer.</text>
</comment>
<comment type="similarity">
    <text evidence="1">Belongs to the IPP transferase family.</text>
</comment>